<name>MEND_CORJK</name>
<feature type="chain" id="PRO_0000341729" description="2-succinyl-5-enolpyruvyl-6-hydroxy-3-cyclohexene-1-carboxylate synthase">
    <location>
        <begin position="1"/>
        <end position="589"/>
    </location>
</feature>
<feature type="region of interest" description="Disordered" evidence="2">
    <location>
        <begin position="198"/>
        <end position="222"/>
    </location>
</feature>
<proteinExistence type="inferred from homology"/>
<comment type="function">
    <text evidence="1">Catalyzes the thiamine diphosphate-dependent decarboxylation of 2-oxoglutarate and the subsequent addition of the resulting succinic semialdehyde-thiamine pyrophosphate anion to isochorismate to yield 2-succinyl-5-enolpyruvyl-6-hydroxy-3-cyclohexene-1-carboxylate (SEPHCHC).</text>
</comment>
<comment type="catalytic activity">
    <reaction evidence="1">
        <text>isochorismate + 2-oxoglutarate + H(+) = 5-enolpyruvoyl-6-hydroxy-2-succinyl-cyclohex-3-ene-1-carboxylate + CO2</text>
        <dbReference type="Rhea" id="RHEA:25593"/>
        <dbReference type="ChEBI" id="CHEBI:15378"/>
        <dbReference type="ChEBI" id="CHEBI:16526"/>
        <dbReference type="ChEBI" id="CHEBI:16810"/>
        <dbReference type="ChEBI" id="CHEBI:29780"/>
        <dbReference type="ChEBI" id="CHEBI:58818"/>
        <dbReference type="EC" id="2.2.1.9"/>
    </reaction>
</comment>
<comment type="cofactor">
    <cofactor evidence="1">
        <name>Mg(2+)</name>
        <dbReference type="ChEBI" id="CHEBI:18420"/>
    </cofactor>
    <cofactor evidence="1">
        <name>Mn(2+)</name>
        <dbReference type="ChEBI" id="CHEBI:29035"/>
    </cofactor>
</comment>
<comment type="cofactor">
    <cofactor evidence="1">
        <name>thiamine diphosphate</name>
        <dbReference type="ChEBI" id="CHEBI:58937"/>
    </cofactor>
    <text evidence="1">Binds 1 thiamine pyrophosphate per subunit.</text>
</comment>
<comment type="pathway">
    <text evidence="1">Quinol/quinone metabolism; 1,4-dihydroxy-2-naphthoate biosynthesis; 1,4-dihydroxy-2-naphthoate from chorismate: step 2/7.</text>
</comment>
<comment type="pathway">
    <text evidence="1">Quinol/quinone metabolism; menaquinone biosynthesis.</text>
</comment>
<comment type="subunit">
    <text evidence="1">Homodimer.</text>
</comment>
<comment type="similarity">
    <text evidence="1">Belongs to the TPP enzyme family. MenD subfamily.</text>
</comment>
<comment type="sequence caution" evidence="3">
    <conflict type="erroneous initiation">
        <sequence resource="EMBL-CDS" id="CAI38048"/>
    </conflict>
</comment>
<accession>Q4JT09</accession>
<gene>
    <name evidence="1" type="primary">menD</name>
    <name type="ordered locus">jk1868</name>
</gene>
<dbReference type="EC" id="2.2.1.9" evidence="1"/>
<dbReference type="EMBL" id="CR931997">
    <property type="protein sequence ID" value="CAI38048.1"/>
    <property type="status" value="ALT_INIT"/>
    <property type="molecule type" value="Genomic_DNA"/>
</dbReference>
<dbReference type="SMR" id="Q4JT09"/>
<dbReference type="STRING" id="306537.jk1868"/>
<dbReference type="KEGG" id="cjk:jk1868"/>
<dbReference type="eggNOG" id="COG1165">
    <property type="taxonomic scope" value="Bacteria"/>
</dbReference>
<dbReference type="HOGENOM" id="CLU_006051_4_1_11"/>
<dbReference type="OrthoDB" id="9791859at2"/>
<dbReference type="UniPathway" id="UPA00079"/>
<dbReference type="UniPathway" id="UPA01057">
    <property type="reaction ID" value="UER00164"/>
</dbReference>
<dbReference type="Proteomes" id="UP000000545">
    <property type="component" value="Chromosome"/>
</dbReference>
<dbReference type="GO" id="GO:0070204">
    <property type="term" value="F:2-succinyl-5-enolpyruvyl-6-hydroxy-3-cyclohexene-1-carboxylic-acid synthase activity"/>
    <property type="evidence" value="ECO:0007669"/>
    <property type="project" value="UniProtKB-UniRule"/>
</dbReference>
<dbReference type="GO" id="GO:0000287">
    <property type="term" value="F:magnesium ion binding"/>
    <property type="evidence" value="ECO:0007669"/>
    <property type="project" value="UniProtKB-UniRule"/>
</dbReference>
<dbReference type="GO" id="GO:0030145">
    <property type="term" value="F:manganese ion binding"/>
    <property type="evidence" value="ECO:0007669"/>
    <property type="project" value="UniProtKB-UniRule"/>
</dbReference>
<dbReference type="GO" id="GO:0030976">
    <property type="term" value="F:thiamine pyrophosphate binding"/>
    <property type="evidence" value="ECO:0007669"/>
    <property type="project" value="UniProtKB-UniRule"/>
</dbReference>
<dbReference type="GO" id="GO:0009234">
    <property type="term" value="P:menaquinone biosynthetic process"/>
    <property type="evidence" value="ECO:0007669"/>
    <property type="project" value="UniProtKB-UniRule"/>
</dbReference>
<dbReference type="CDD" id="cd07037">
    <property type="entry name" value="TPP_PYR_MenD"/>
    <property type="match status" value="1"/>
</dbReference>
<dbReference type="CDD" id="cd02009">
    <property type="entry name" value="TPP_SHCHC_synthase"/>
    <property type="match status" value="1"/>
</dbReference>
<dbReference type="Gene3D" id="3.40.50.970">
    <property type="match status" value="2"/>
</dbReference>
<dbReference type="Gene3D" id="3.40.50.1220">
    <property type="entry name" value="TPP-binding domain"/>
    <property type="match status" value="1"/>
</dbReference>
<dbReference type="HAMAP" id="MF_01659">
    <property type="entry name" value="MenD"/>
    <property type="match status" value="1"/>
</dbReference>
<dbReference type="InterPro" id="IPR004433">
    <property type="entry name" value="MenaQ_synth_MenD"/>
</dbReference>
<dbReference type="InterPro" id="IPR029061">
    <property type="entry name" value="THDP-binding"/>
</dbReference>
<dbReference type="InterPro" id="IPR012001">
    <property type="entry name" value="Thiamin_PyroP_enz_TPP-bd_dom"/>
</dbReference>
<dbReference type="InterPro" id="IPR011766">
    <property type="entry name" value="TPP_enzyme_TPP-bd"/>
</dbReference>
<dbReference type="NCBIfam" id="TIGR00173">
    <property type="entry name" value="menD"/>
    <property type="match status" value="1"/>
</dbReference>
<dbReference type="PANTHER" id="PTHR42916">
    <property type="entry name" value="2-SUCCINYL-5-ENOLPYRUVYL-6-HYDROXY-3-CYCLOHEXENE-1-CARBOXYLATE SYNTHASE"/>
    <property type="match status" value="1"/>
</dbReference>
<dbReference type="PANTHER" id="PTHR42916:SF1">
    <property type="entry name" value="PROTEIN PHYLLO, CHLOROPLASTIC"/>
    <property type="match status" value="1"/>
</dbReference>
<dbReference type="Pfam" id="PF02775">
    <property type="entry name" value="TPP_enzyme_C"/>
    <property type="match status" value="1"/>
</dbReference>
<dbReference type="Pfam" id="PF02776">
    <property type="entry name" value="TPP_enzyme_N"/>
    <property type="match status" value="1"/>
</dbReference>
<dbReference type="PIRSF" id="PIRSF004983">
    <property type="entry name" value="MenD"/>
    <property type="match status" value="1"/>
</dbReference>
<dbReference type="SUPFAM" id="SSF52518">
    <property type="entry name" value="Thiamin diphosphate-binding fold (THDP-binding)"/>
    <property type="match status" value="2"/>
</dbReference>
<organism>
    <name type="scientific">Corynebacterium jeikeium (strain K411)</name>
    <dbReference type="NCBI Taxonomy" id="306537"/>
    <lineage>
        <taxon>Bacteria</taxon>
        <taxon>Bacillati</taxon>
        <taxon>Actinomycetota</taxon>
        <taxon>Actinomycetes</taxon>
        <taxon>Mycobacteriales</taxon>
        <taxon>Corynebacteriaceae</taxon>
        <taxon>Corynebacterium</taxon>
    </lineage>
</organism>
<protein>
    <recommendedName>
        <fullName evidence="1">2-succinyl-5-enolpyruvyl-6-hydroxy-3-cyclohexene-1-carboxylate synthase</fullName>
        <shortName evidence="1">SEPHCHC synthase</shortName>
        <ecNumber evidence="1">2.2.1.9</ecNumber>
    </recommendedName>
    <alternativeName>
        <fullName evidence="1">Menaquinone biosynthesis protein MenD</fullName>
    </alternativeName>
</protein>
<evidence type="ECO:0000255" key="1">
    <source>
        <dbReference type="HAMAP-Rule" id="MF_01659"/>
    </source>
</evidence>
<evidence type="ECO:0000256" key="2">
    <source>
        <dbReference type="SAM" id="MobiDB-lite"/>
    </source>
</evidence>
<evidence type="ECO:0000305" key="3"/>
<sequence>MRAGLVLVDQLIRSGVREAVLCPGSRNSPLNLAFVEAERVGRVRLHVRTDERSAAFLALGLAKVSRRPVPVVMTSGTAVANCLPAMVEATLSGVPLVVLSANRPLSMLGSGANQTIDQAEIFGTHSVCTLNTGELALEGAAAGAAGELRDLVRKLINAATDPIDGGGAHLDVPLREPLVPPTLDELSLWAGEIAAAEDAATTEGAHDSHAPSQPTRGPRKLPYGQVEVDLSRRTLVIAGSVSDVAWARSIMDELADVPTVAEPVAPAPDFPVHSAAVDMFSTQVVSDGEHSAVTIPEQIVVIGRPTLHRGVTKLLANKDINVIALSDTRNVTDVFDNVDEVGSTVRPRGEQPESWLQVARAISDMGVNQVRDGLAEREPFTAVHAVAVVADALRDGDLLVLGASTAVRDASRAGLPFDGVQAIANRGAAGIDGTISTAVGAAMAHAHADPTAIRAPRTIAVMGDLTFAHDLGGLNIGPLEPRPDNLLIVLTNDSGGGIFETLEPGAENLRTFADGTAAFERVFGTPLDLDFAELCAGFGVEHKLATSVEELATVIDEHAEIGGSGITVLEVKVSRRGRQEIEKRIAGTR</sequence>
<keyword id="KW-0460">Magnesium</keyword>
<keyword id="KW-0464">Manganese</keyword>
<keyword id="KW-0474">Menaquinone biosynthesis</keyword>
<keyword id="KW-0479">Metal-binding</keyword>
<keyword id="KW-1185">Reference proteome</keyword>
<keyword id="KW-0786">Thiamine pyrophosphate</keyword>
<keyword id="KW-0808">Transferase</keyword>
<reference key="1">
    <citation type="journal article" date="2005" name="J. Bacteriol.">
        <title>Complete genome sequence and analysis of the multiresistant nosocomial pathogen Corynebacterium jeikeium K411, a lipid-requiring bacterium of the human skin flora.</title>
        <authorList>
            <person name="Tauch A."/>
            <person name="Kaiser O."/>
            <person name="Hain T."/>
            <person name="Goesmann A."/>
            <person name="Weisshaar B."/>
            <person name="Albersmeier A."/>
            <person name="Bekel T."/>
            <person name="Bischoff N."/>
            <person name="Brune I."/>
            <person name="Chakraborty T."/>
            <person name="Kalinowski J."/>
            <person name="Meyer F."/>
            <person name="Rupp O."/>
            <person name="Schneiker S."/>
            <person name="Viehoever P."/>
            <person name="Puehler A."/>
        </authorList>
    </citation>
    <scope>NUCLEOTIDE SEQUENCE [LARGE SCALE GENOMIC DNA]</scope>
    <source>
        <strain>K411</strain>
    </source>
</reference>